<comment type="function">
    <text>Involved in gametogenesis and steroidogenesis.</text>
</comment>
<comment type="subunit">
    <text>Heterodimer of an alpha and a beta chain.</text>
</comment>
<comment type="subcellular location">
    <subcellularLocation>
        <location>Secreted</location>
    </subcellularLocation>
</comment>
<comment type="similarity">
    <text evidence="3">Belongs to the glycoprotein hormones subunit beta family.</text>
</comment>
<feature type="signal peptide" evidence="2">
    <location>
        <begin position="1"/>
        <end position="18"/>
    </location>
</feature>
<feature type="chain" id="PRO_0000011688" description="Gonadotropin subunit beta-1">
    <location>
        <begin position="19"/>
        <end position="130"/>
    </location>
</feature>
<feature type="glycosylation site" description="N-linked (GlcNAc...) asparagine" evidence="2">
    <location>
        <position position="30"/>
    </location>
</feature>
<feature type="disulfide bond" evidence="1">
    <location>
        <begin position="26"/>
        <end position="74"/>
    </location>
</feature>
<feature type="disulfide bond" evidence="1">
    <location>
        <begin position="40"/>
        <end position="89"/>
    </location>
</feature>
<feature type="disulfide bond" evidence="1">
    <location>
        <begin position="51"/>
        <end position="105"/>
    </location>
</feature>
<feature type="disulfide bond" evidence="1">
    <location>
        <begin position="55"/>
        <end position="107"/>
    </location>
</feature>
<feature type="disulfide bond" evidence="1">
    <location>
        <begin position="110"/>
        <end position="117"/>
    </location>
</feature>
<proteinExistence type="evidence at transcript level"/>
<name>GTHB1_CYPCA</name>
<organism>
    <name type="scientific">Cyprinus carpio</name>
    <name type="common">Common carp</name>
    <dbReference type="NCBI Taxonomy" id="7962"/>
    <lineage>
        <taxon>Eukaryota</taxon>
        <taxon>Metazoa</taxon>
        <taxon>Chordata</taxon>
        <taxon>Craniata</taxon>
        <taxon>Vertebrata</taxon>
        <taxon>Euteleostomi</taxon>
        <taxon>Actinopterygii</taxon>
        <taxon>Neopterygii</taxon>
        <taxon>Teleostei</taxon>
        <taxon>Ostariophysi</taxon>
        <taxon>Cypriniformes</taxon>
        <taxon>Cyprinidae</taxon>
        <taxon>Cyprininae</taxon>
        <taxon>Cyprinus</taxon>
    </lineage>
</organism>
<gene>
    <name type="primary">cgba</name>
</gene>
<reference key="1">
    <citation type="submission" date="1997-05" db="EMBL/GenBank/DDBJ databases">
        <title>cDNA cloning of cyprinid gonadotropin I beta subunits.</title>
        <authorList>
            <person name="Kobayashi M."/>
            <person name="Iwasaki M."/>
            <person name="Kondo H."/>
            <person name="Yoshiura Y."/>
            <person name="Watabe S."/>
        </authorList>
    </citation>
    <scope>NUCLEOTIDE SEQUENCE [MRNA]</scope>
</reference>
<sequence>MRMHFVVMVMLLPALMMAGSECRSSCRLTNISITVESEECGSCITIDTTACAGLCKTQESVYRSPLMLSYQNTCNFREWTYETYEFKGCPARADSVFTYPVALSCECSKCNSDITDCGALSQQTLSCNAH</sequence>
<accession>O13050</accession>
<protein>
    <recommendedName>
        <fullName>Gonadotropin subunit beta-1</fullName>
    </recommendedName>
    <alternativeName>
        <fullName>Follicle-stimulating hormone-like GTH</fullName>
    </alternativeName>
    <alternativeName>
        <fullName>GTH-I-beta</fullName>
    </alternativeName>
    <alternativeName>
        <fullName>Gonadotropin beta-I chain</fullName>
    </alternativeName>
</protein>
<dbReference type="EMBL" id="AB003583">
    <property type="protein sequence ID" value="BAA20080.1"/>
    <property type="molecule type" value="mRNA"/>
</dbReference>
<dbReference type="SMR" id="O13050"/>
<dbReference type="GlyCosmos" id="O13050">
    <property type="glycosylation" value="1 site, No reported glycans"/>
</dbReference>
<dbReference type="Ensembl" id="ENSCCRT00015002108.1">
    <property type="protein sequence ID" value="ENSCCRP00015001986.1"/>
    <property type="gene ID" value="ENSCCRG00015001280.1"/>
</dbReference>
<dbReference type="Proteomes" id="UP000694384">
    <property type="component" value="Unplaced"/>
</dbReference>
<dbReference type="Proteomes" id="UP000694427">
    <property type="component" value="Unplaced"/>
</dbReference>
<dbReference type="Proteomes" id="UP000694700">
    <property type="component" value="Unplaced"/>
</dbReference>
<dbReference type="Proteomes" id="UP000694701">
    <property type="component" value="Unplaced"/>
</dbReference>
<dbReference type="Proteomes" id="UP001155660">
    <property type="component" value="Unplaced"/>
</dbReference>
<dbReference type="GO" id="GO:0005737">
    <property type="term" value="C:cytoplasm"/>
    <property type="evidence" value="ECO:0007669"/>
    <property type="project" value="TreeGrafter"/>
</dbReference>
<dbReference type="GO" id="GO:0005615">
    <property type="term" value="C:extracellular space"/>
    <property type="evidence" value="ECO:0007669"/>
    <property type="project" value="TreeGrafter"/>
</dbReference>
<dbReference type="GO" id="GO:0005179">
    <property type="term" value="F:hormone activity"/>
    <property type="evidence" value="ECO:0007669"/>
    <property type="project" value="UniProtKB-KW"/>
</dbReference>
<dbReference type="GO" id="GO:0007186">
    <property type="term" value="P:G protein-coupled receptor signaling pathway"/>
    <property type="evidence" value="ECO:0007669"/>
    <property type="project" value="TreeGrafter"/>
</dbReference>
<dbReference type="GO" id="GO:0030728">
    <property type="term" value="P:ovulation"/>
    <property type="evidence" value="ECO:0007669"/>
    <property type="project" value="TreeGrafter"/>
</dbReference>
<dbReference type="CDD" id="cd00069">
    <property type="entry name" value="GHB_like"/>
    <property type="match status" value="1"/>
</dbReference>
<dbReference type="FunFam" id="2.10.90.10:FF:000007">
    <property type="entry name" value="Luteinizing hormone beta subunit"/>
    <property type="match status" value="1"/>
</dbReference>
<dbReference type="Gene3D" id="2.10.90.10">
    <property type="entry name" value="Cystine-knot cytokines"/>
    <property type="match status" value="1"/>
</dbReference>
<dbReference type="InterPro" id="IPR029034">
    <property type="entry name" value="Cystine-knot_cytokine"/>
</dbReference>
<dbReference type="InterPro" id="IPR006208">
    <property type="entry name" value="Glyco_hormone_CN"/>
</dbReference>
<dbReference type="InterPro" id="IPR001545">
    <property type="entry name" value="Gonadotropin_bsu"/>
</dbReference>
<dbReference type="InterPro" id="IPR018245">
    <property type="entry name" value="Gonadotropin_bsu_CS"/>
</dbReference>
<dbReference type="PANTHER" id="PTHR11515">
    <property type="entry name" value="GLYCOPROTEIN HORMONE BETA CHAIN"/>
    <property type="match status" value="1"/>
</dbReference>
<dbReference type="PANTHER" id="PTHR11515:SF11">
    <property type="entry name" value="LUTROPIN SUBUNIT BETA"/>
    <property type="match status" value="1"/>
</dbReference>
<dbReference type="Pfam" id="PF00007">
    <property type="entry name" value="Cys_knot"/>
    <property type="match status" value="1"/>
</dbReference>
<dbReference type="SMART" id="SM00068">
    <property type="entry name" value="GHB"/>
    <property type="match status" value="1"/>
</dbReference>
<dbReference type="SUPFAM" id="SSF57501">
    <property type="entry name" value="Cystine-knot cytokines"/>
    <property type="match status" value="1"/>
</dbReference>
<dbReference type="PROSITE" id="PS00261">
    <property type="entry name" value="GLYCO_HORMONE_BETA_1"/>
    <property type="match status" value="1"/>
</dbReference>
<dbReference type="PROSITE" id="PS00689">
    <property type="entry name" value="GLYCO_HORMONE_BETA_2"/>
    <property type="match status" value="1"/>
</dbReference>
<keyword id="KW-1015">Disulfide bond</keyword>
<keyword id="KW-0325">Glycoprotein</keyword>
<keyword id="KW-0372">Hormone</keyword>
<keyword id="KW-1185">Reference proteome</keyword>
<keyword id="KW-0964">Secreted</keyword>
<keyword id="KW-0732">Signal</keyword>
<evidence type="ECO:0000250" key="1"/>
<evidence type="ECO:0000255" key="2"/>
<evidence type="ECO:0000305" key="3"/>